<organism>
    <name type="scientific">Salmonella newport (strain SL254)</name>
    <dbReference type="NCBI Taxonomy" id="423368"/>
    <lineage>
        <taxon>Bacteria</taxon>
        <taxon>Pseudomonadati</taxon>
        <taxon>Pseudomonadota</taxon>
        <taxon>Gammaproteobacteria</taxon>
        <taxon>Enterobacterales</taxon>
        <taxon>Enterobacteriaceae</taxon>
        <taxon>Salmonella</taxon>
    </lineage>
</organism>
<protein>
    <recommendedName>
        <fullName evidence="1">Ribosomal RNA small subunit methyltransferase G</fullName>
        <ecNumber evidence="1">2.1.1.170</ecNumber>
    </recommendedName>
    <alternativeName>
        <fullName evidence="1">16S rRNA 7-methylguanosine methyltransferase</fullName>
        <shortName evidence="1">16S rRNA m7G methyltransferase</shortName>
    </alternativeName>
</protein>
<comment type="function">
    <text evidence="1">Specifically methylates the N7 position of guanine in position 527 of 16S rRNA.</text>
</comment>
<comment type="catalytic activity">
    <reaction evidence="1">
        <text>guanosine(527) in 16S rRNA + S-adenosyl-L-methionine = N(7)-methylguanosine(527) in 16S rRNA + S-adenosyl-L-homocysteine</text>
        <dbReference type="Rhea" id="RHEA:42732"/>
        <dbReference type="Rhea" id="RHEA-COMP:10209"/>
        <dbReference type="Rhea" id="RHEA-COMP:10210"/>
        <dbReference type="ChEBI" id="CHEBI:57856"/>
        <dbReference type="ChEBI" id="CHEBI:59789"/>
        <dbReference type="ChEBI" id="CHEBI:74269"/>
        <dbReference type="ChEBI" id="CHEBI:74480"/>
        <dbReference type="EC" id="2.1.1.170"/>
    </reaction>
</comment>
<comment type="subcellular location">
    <subcellularLocation>
        <location evidence="1">Cytoplasm</location>
    </subcellularLocation>
</comment>
<comment type="similarity">
    <text evidence="1">Belongs to the methyltransferase superfamily. RNA methyltransferase RsmG family.</text>
</comment>
<accession>B4SYE1</accession>
<evidence type="ECO:0000255" key="1">
    <source>
        <dbReference type="HAMAP-Rule" id="MF_00074"/>
    </source>
</evidence>
<keyword id="KW-0963">Cytoplasm</keyword>
<keyword id="KW-0489">Methyltransferase</keyword>
<keyword id="KW-0698">rRNA processing</keyword>
<keyword id="KW-0949">S-adenosyl-L-methionine</keyword>
<keyword id="KW-0808">Transferase</keyword>
<feature type="chain" id="PRO_1000092650" description="Ribosomal RNA small subunit methyltransferase G">
    <location>
        <begin position="1"/>
        <end position="207"/>
    </location>
</feature>
<feature type="binding site" evidence="1">
    <location>
        <position position="73"/>
    </location>
    <ligand>
        <name>S-adenosyl-L-methionine</name>
        <dbReference type="ChEBI" id="CHEBI:59789"/>
    </ligand>
</feature>
<feature type="binding site" evidence="1">
    <location>
        <position position="78"/>
    </location>
    <ligand>
        <name>S-adenosyl-L-methionine</name>
        <dbReference type="ChEBI" id="CHEBI:59789"/>
    </ligand>
</feature>
<feature type="binding site" evidence="1">
    <location>
        <begin position="124"/>
        <end position="125"/>
    </location>
    <ligand>
        <name>S-adenosyl-L-methionine</name>
        <dbReference type="ChEBI" id="CHEBI:59789"/>
    </ligand>
</feature>
<feature type="binding site" evidence="1">
    <location>
        <position position="139"/>
    </location>
    <ligand>
        <name>S-adenosyl-L-methionine</name>
        <dbReference type="ChEBI" id="CHEBI:59789"/>
    </ligand>
</feature>
<proteinExistence type="inferred from homology"/>
<dbReference type="EC" id="2.1.1.170" evidence="1"/>
<dbReference type="EMBL" id="CP001113">
    <property type="protein sequence ID" value="ACF62224.1"/>
    <property type="molecule type" value="Genomic_DNA"/>
</dbReference>
<dbReference type="RefSeq" id="WP_001519938.1">
    <property type="nucleotide sequence ID" value="NZ_CCMR01000001.1"/>
</dbReference>
<dbReference type="SMR" id="B4SYE1"/>
<dbReference type="KEGG" id="see:SNSL254_A4156"/>
<dbReference type="HOGENOM" id="CLU_065341_2_2_6"/>
<dbReference type="Proteomes" id="UP000008824">
    <property type="component" value="Chromosome"/>
</dbReference>
<dbReference type="GO" id="GO:0005829">
    <property type="term" value="C:cytosol"/>
    <property type="evidence" value="ECO:0007669"/>
    <property type="project" value="TreeGrafter"/>
</dbReference>
<dbReference type="GO" id="GO:0070043">
    <property type="term" value="F:rRNA (guanine-N7-)-methyltransferase activity"/>
    <property type="evidence" value="ECO:0007669"/>
    <property type="project" value="UniProtKB-UniRule"/>
</dbReference>
<dbReference type="CDD" id="cd02440">
    <property type="entry name" value="AdoMet_MTases"/>
    <property type="match status" value="1"/>
</dbReference>
<dbReference type="FunFam" id="3.40.50.150:FF:000032">
    <property type="entry name" value="Ribosomal RNA small subunit methyltransferase G"/>
    <property type="match status" value="1"/>
</dbReference>
<dbReference type="Gene3D" id="3.40.50.150">
    <property type="entry name" value="Vaccinia Virus protein VP39"/>
    <property type="match status" value="1"/>
</dbReference>
<dbReference type="HAMAP" id="MF_00074">
    <property type="entry name" value="16SrRNA_methyltr_G"/>
    <property type="match status" value="1"/>
</dbReference>
<dbReference type="InterPro" id="IPR003682">
    <property type="entry name" value="rRNA_ssu_MeTfrase_G"/>
</dbReference>
<dbReference type="InterPro" id="IPR029063">
    <property type="entry name" value="SAM-dependent_MTases_sf"/>
</dbReference>
<dbReference type="NCBIfam" id="TIGR00138">
    <property type="entry name" value="rsmG_gidB"/>
    <property type="match status" value="1"/>
</dbReference>
<dbReference type="PANTHER" id="PTHR31760">
    <property type="entry name" value="S-ADENOSYL-L-METHIONINE-DEPENDENT METHYLTRANSFERASES SUPERFAMILY PROTEIN"/>
    <property type="match status" value="1"/>
</dbReference>
<dbReference type="PANTHER" id="PTHR31760:SF0">
    <property type="entry name" value="S-ADENOSYL-L-METHIONINE-DEPENDENT METHYLTRANSFERASES SUPERFAMILY PROTEIN"/>
    <property type="match status" value="1"/>
</dbReference>
<dbReference type="Pfam" id="PF02527">
    <property type="entry name" value="GidB"/>
    <property type="match status" value="1"/>
</dbReference>
<dbReference type="PIRSF" id="PIRSF003078">
    <property type="entry name" value="GidB"/>
    <property type="match status" value="1"/>
</dbReference>
<dbReference type="SUPFAM" id="SSF53335">
    <property type="entry name" value="S-adenosyl-L-methionine-dependent methyltransferases"/>
    <property type="match status" value="1"/>
</dbReference>
<name>RSMG_SALNS</name>
<reference key="1">
    <citation type="journal article" date="2011" name="J. Bacteriol.">
        <title>Comparative genomics of 28 Salmonella enterica isolates: evidence for CRISPR-mediated adaptive sublineage evolution.</title>
        <authorList>
            <person name="Fricke W.F."/>
            <person name="Mammel M.K."/>
            <person name="McDermott P.F."/>
            <person name="Tartera C."/>
            <person name="White D.G."/>
            <person name="Leclerc J.E."/>
            <person name="Ravel J."/>
            <person name="Cebula T.A."/>
        </authorList>
    </citation>
    <scope>NUCLEOTIDE SEQUENCE [LARGE SCALE GENOMIC DNA]</scope>
    <source>
        <strain>SL254</strain>
    </source>
</reference>
<gene>
    <name evidence="1" type="primary">rsmG</name>
    <name type="ordered locus">SNSL254_A4156</name>
</gene>
<sequence>MLNKLSRLLADAGISLTDHQKTLLVAYVDMLHKWNKAYNLTSVRDPNEMLVRHILDSIVVAPYLQGQRFIDVGTGPGLPGIPLAIVLPDAHFTLLDSLGKRVRFLRQVQHELKLENITPVQSRVEAYPSEPPFDGVISRAFASLNDMVSWCHHLPGEKGRFYALKGQLPGDEIASLPDNFSVESVEKLRVPQLEGERHLVIIKSNKV</sequence>